<comment type="function">
    <text evidence="2 5 6">Part of the ABC transporter complex FhuCDB involved in iron(3+)-hydroxamate import. Responsible for the translocation of the substrate across the membrane.</text>
</comment>
<comment type="subunit">
    <text evidence="2 6 7 8">The complex is composed of two ATP-binding proteins (FhuC), a transmembrane protein (FhuB) and a solute-binding protein (FhuD) (PubMed:34887516). FhuB interacts with FhuC (PubMed:1551849). FhuB interacts with FhuD (PubMed:34887516, PubMed:8522527, PubMed:9426146). FhuB binds substrate-loaded FhuD more strongly than FhuD alone (PubMed:34887516).</text>
</comment>
<comment type="subcellular location">
    <subcellularLocation>
        <location evidence="3">Cell inner membrane</location>
        <topology evidence="1 3">Multi-pass membrane protein</topology>
    </subcellularLocation>
</comment>
<comment type="induction">
    <text evidence="4">Induced 2.1-fold by hydroxyurea.</text>
</comment>
<comment type="domain">
    <text evidence="8">FhuD interacts with a periplasmic and a transmembrane/cytoplasmic region of FhuB. The transmembrane region may be part of a pore through which a portion of FhuD inserts into the cytoplasmic membrane during transport.</text>
</comment>
<comment type="similarity">
    <text evidence="9">Belongs to the binding-protein-dependent transport system permease family. FecCD subfamily.</text>
</comment>
<comment type="sequence caution" evidence="9">
    <conflict type="erroneous initiation">
        <sequence resource="EMBL-CDS" id="CAA27853"/>
    </conflict>
    <text>Truncated N-terminus.</text>
</comment>
<proteinExistence type="evidence at protein level"/>
<feature type="chain" id="PRO_0000060028" description="Iron(3+)-hydroxamate import system permease protein FhuB">
    <location>
        <begin position="1"/>
        <end position="660"/>
    </location>
</feature>
<feature type="transmembrane region" description="Helical" evidence="1">
    <location>
        <begin position="5"/>
        <end position="25"/>
    </location>
</feature>
<feature type="transmembrane region" description="Helical" evidence="1">
    <location>
        <begin position="62"/>
        <end position="82"/>
    </location>
</feature>
<feature type="transmembrane region" description="Helical" evidence="1">
    <location>
        <begin position="93"/>
        <end position="113"/>
    </location>
</feature>
<feature type="transmembrane region" description="Helical" evidence="1">
    <location>
        <begin position="118"/>
        <end position="138"/>
    </location>
</feature>
<feature type="transmembrane region" description="Helical" evidence="1">
    <location>
        <begin position="147"/>
        <end position="167"/>
    </location>
</feature>
<feature type="transmembrane region" description="Helical" evidence="1">
    <location>
        <begin position="197"/>
        <end position="217"/>
    </location>
</feature>
<feature type="transmembrane region" description="Helical" evidence="1">
    <location>
        <begin position="240"/>
        <end position="260"/>
    </location>
</feature>
<feature type="transmembrane region" description="Helical" evidence="1">
    <location>
        <begin position="277"/>
        <end position="297"/>
    </location>
</feature>
<feature type="transmembrane region" description="Helical" evidence="1">
    <location>
        <begin position="303"/>
        <end position="323"/>
    </location>
</feature>
<feature type="transmembrane region" description="Helical" evidence="1">
    <location>
        <begin position="348"/>
        <end position="368"/>
    </location>
</feature>
<feature type="transmembrane region" description="Helical" evidence="1">
    <location>
        <begin position="391"/>
        <end position="411"/>
    </location>
</feature>
<feature type="transmembrane region" description="Helical" evidence="1">
    <location>
        <begin position="424"/>
        <end position="444"/>
    </location>
</feature>
<feature type="transmembrane region" description="Helical" evidence="1">
    <location>
        <begin position="447"/>
        <end position="467"/>
    </location>
</feature>
<feature type="transmembrane region" description="Helical" evidence="1">
    <location>
        <begin position="479"/>
        <end position="499"/>
    </location>
</feature>
<feature type="transmembrane region" description="Helical" evidence="1">
    <location>
        <begin position="528"/>
        <end position="548"/>
    </location>
</feature>
<feature type="transmembrane region" description="Helical" evidence="1">
    <location>
        <begin position="567"/>
        <end position="587"/>
    </location>
</feature>
<feature type="transmembrane region" description="Helical" evidence="1">
    <location>
        <begin position="607"/>
        <end position="627"/>
    </location>
</feature>
<feature type="transmembrane region" description="Helical" evidence="1">
    <location>
        <begin position="635"/>
        <end position="655"/>
    </location>
</feature>
<feature type="site" description="Interaction with FhuD" evidence="6 10">
    <location>
        <position position="182"/>
    </location>
</feature>
<feature type="site" description="Interaction with FhuD" evidence="6 10">
    <location>
        <position position="184"/>
    </location>
</feature>
<feature type="site" description="Interaction with FhuD" evidence="6 10">
    <location>
        <position position="304"/>
    </location>
</feature>
<feature type="site" description="Interaction with FhuD" evidence="6 10">
    <location>
        <position position="390"/>
    </location>
</feature>
<feature type="site" description="Interaction with FhuD" evidence="6 10">
    <location>
        <position position="515"/>
    </location>
</feature>
<feature type="site" description="Interaction with FhuD" evidence="6 10">
    <location>
        <position position="517"/>
    </location>
</feature>
<feature type="mutagenesis site" description="Decreased binding to ferrichrome-FhuD." evidence="6">
    <original>S</original>
    <variation>A</variation>
    <location>
        <position position="57"/>
    </location>
</feature>
<feature type="mutagenesis site" description="Loss of binding to ferrichrome-FhuD; when associated with A-171." evidence="6">
    <original>D</original>
    <variation>A</variation>
    <location>
        <position position="170"/>
    </location>
</feature>
<feature type="mutagenesis site" description="Loss of binding to ferrichrome-FhuD; when associated with A-170." evidence="6">
    <original>Q</original>
    <variation>A</variation>
    <location>
        <position position="171"/>
    </location>
</feature>
<feature type="mutagenesis site" description="No effect on ATPase activity, but 80% decrease in Fe-ferrichrome transport efficiency of the FhuCB complex compared to wild-type; when associated with A-484; A-492 and A-495." evidence="6">
    <original>M</original>
    <variation>A</variation>
    <location>
        <position position="175"/>
    </location>
</feature>
<feature type="mutagenesis site" description="No effect on ATPase activity, but 50% decrease in Fe-ferrichrome transport efficiency of the FhuCB complex compared to wild-type; when associated with L-484; L-492 and L-495." evidence="6">
    <original>M</original>
    <variation>L</variation>
    <location>
        <position position="175"/>
    </location>
</feature>
<feature type="mutagenesis site" description="Loss of binding to ferrichrome-FhuD; when associated with A-184." evidence="6">
    <original>T</original>
    <variation>A</variation>
    <location>
        <position position="182"/>
    </location>
</feature>
<feature type="mutagenesis site" description="Loss of binding to ferrichrome-FhuD; when associated with A-182." evidence="6">
    <original>T</original>
    <variation>A</variation>
    <location>
        <position position="184"/>
    </location>
</feature>
<feature type="mutagenesis site" description="Decreased binding to ferrichrome-FhuD." evidence="6">
    <original>E</original>
    <variation>A</variation>
    <location>
        <position position="304"/>
    </location>
</feature>
<feature type="mutagenesis site" description="Decreased binding to ferrichrome-FhuD." evidence="6">
    <original>R</original>
    <variation>A</variation>
    <location>
        <position position="390"/>
    </location>
</feature>
<feature type="mutagenesis site" description="No effect on ATPase activity, but 80% decrease in Fe-ferrichrome transport efficiency of the FhuCB complex compared to wild-type; when associated with A-175; A-492 and A-495." evidence="6">
    <original>M</original>
    <variation>A</variation>
    <location>
        <position position="484"/>
    </location>
</feature>
<feature type="mutagenesis site" description="No effect on ATPase activity, but 50% decrease in Fe-ferrichrome transport efficiency of the FhuCB complex compared to wild-type; when associated with L-175; L-492 and L-495." evidence="6">
    <original>M</original>
    <variation>L</variation>
    <location>
        <position position="484"/>
    </location>
</feature>
<feature type="mutagenesis site" description="No effect on ATPase activity, but 80% decrease in Fe-ferrichrome transport efficiency of the FhuCB complex compared to wild-type; when associated with A-175; A-484 and A-495." evidence="6">
    <original>M</original>
    <variation>A</variation>
    <location>
        <position position="492"/>
    </location>
</feature>
<feature type="mutagenesis site" description="No effect on ATPase activity, but 50% decrease in Fe-ferrichrome transport efficiency of the FhuCB complex compared to wild-type; when associated with L-175; L-484 and L-495." evidence="6">
    <original>M</original>
    <variation>L</variation>
    <location>
        <position position="492"/>
    </location>
</feature>
<feature type="mutagenesis site" description="No effect on ATPase activity, but 80% decrease in Fe-ferrichrome transport efficiency of the FhuCB complex compared to wild-type; when associated with A-175; A-484 and A-492." evidence="6">
    <original>M</original>
    <variation>A</variation>
    <location>
        <position position="495"/>
    </location>
</feature>
<feature type="mutagenesis site" description="No effect on ATPase activity, but 50% decrease in Fe-ferrichrome transport efficiency of the FhuCB complex compared to wild-type; when associated with L-175; L-484 and L-492." evidence="6">
    <original>M</original>
    <variation>L</variation>
    <location>
        <position position="495"/>
    </location>
</feature>
<feature type="mutagenesis site" description="Decreased binding to ferrichrome-FhuD; when associated with A-510." evidence="6">
    <original>Q</original>
    <variation>A</variation>
    <location>
        <position position="507"/>
    </location>
</feature>
<feature type="mutagenesis site" description="Decreased binding to ferrichrome-FhuD; when associated with A-507." evidence="6">
    <original>T</original>
    <variation>A</variation>
    <location>
        <position position="510"/>
    </location>
</feature>
<feature type="mutagenesis site" description="Loss of binding to ferrichrome-FhuD; when associated with A-517." evidence="6">
    <original>S</original>
    <variation>A</variation>
    <location>
        <position position="515"/>
    </location>
</feature>
<feature type="mutagenesis site" description="Loss of binding to ferrichrome-FhuD; when associated with A-515." evidence="6">
    <original>Y</original>
    <variation>A</variation>
    <location>
        <position position="517"/>
    </location>
</feature>
<feature type="mutagenesis site" description="Decreased binding to ferrichrome-FhuD." evidence="6">
    <original>Q</original>
    <variation>A</variation>
    <location>
        <position position="636"/>
    </location>
</feature>
<feature type="sequence conflict" description="In Ref. 6; CAA29256." evidence="9" ref="6">
    <original>L</original>
    <variation>V</variation>
    <location>
        <position position="11"/>
    </location>
</feature>
<feature type="sequence conflict" description="In Ref. 1; CAA27852/CAA27853." evidence="9" ref="1">
    <original>T</original>
    <variation>I</variation>
    <location>
        <position position="311"/>
    </location>
</feature>
<feature type="sequence conflict" description="In Ref. 1; CAA27852/CAA27853." evidence="9" ref="1">
    <location>
        <position position="364"/>
    </location>
</feature>
<feature type="helix" evidence="11">
    <location>
        <begin position="7"/>
        <end position="31"/>
    </location>
</feature>
<feature type="helix" evidence="11">
    <location>
        <begin position="34"/>
        <end position="36"/>
    </location>
</feature>
<feature type="helix" evidence="11">
    <location>
        <begin position="37"/>
        <end position="41"/>
    </location>
</feature>
<feature type="helix" evidence="11">
    <location>
        <begin position="50"/>
        <end position="53"/>
    </location>
</feature>
<feature type="helix" evidence="11">
    <location>
        <begin position="55"/>
        <end position="82"/>
    </location>
</feature>
<feature type="turn" evidence="11">
    <location>
        <begin position="90"/>
        <end position="94"/>
    </location>
</feature>
<feature type="helix" evidence="11">
    <location>
        <begin position="95"/>
        <end position="107"/>
    </location>
</feature>
<feature type="strand" evidence="11">
    <location>
        <begin position="108"/>
        <end position="110"/>
    </location>
</feature>
<feature type="helix" evidence="11">
    <location>
        <begin position="115"/>
        <end position="133"/>
    </location>
</feature>
<feature type="strand" evidence="11">
    <location>
        <begin position="136"/>
        <end position="138"/>
    </location>
</feature>
<feature type="helix" evidence="11">
    <location>
        <begin position="143"/>
        <end position="167"/>
    </location>
</feature>
<feature type="helix" evidence="11">
    <location>
        <begin position="173"/>
        <end position="178"/>
    </location>
</feature>
<feature type="strand" evidence="11">
    <location>
        <begin position="186"/>
        <end position="188"/>
    </location>
</feature>
<feature type="helix" evidence="11">
    <location>
        <begin position="189"/>
        <end position="206"/>
    </location>
</feature>
<feature type="helix" evidence="11">
    <location>
        <begin position="209"/>
        <end position="216"/>
    </location>
</feature>
<feature type="helix" evidence="11">
    <location>
        <begin position="219"/>
        <end position="224"/>
    </location>
</feature>
<feature type="helix" evidence="11">
    <location>
        <begin position="229"/>
        <end position="250"/>
    </location>
</feature>
<feature type="helix" evidence="11">
    <location>
        <begin position="257"/>
        <end position="259"/>
    </location>
</feature>
<feature type="helix" evidence="11">
    <location>
        <begin position="261"/>
        <end position="268"/>
    </location>
</feature>
<feature type="helix" evidence="11">
    <location>
        <begin position="273"/>
        <end position="301"/>
    </location>
</feature>
<feature type="helix" evidence="11">
    <location>
        <begin position="308"/>
        <end position="322"/>
    </location>
</feature>
<feature type="helix" evidence="11">
    <location>
        <begin position="349"/>
        <end position="369"/>
    </location>
</feature>
<feature type="strand" evidence="11">
    <location>
        <begin position="372"/>
        <end position="375"/>
    </location>
</feature>
<feature type="helix" evidence="11">
    <location>
        <begin position="381"/>
        <end position="386"/>
    </location>
</feature>
<feature type="helix" evidence="11">
    <location>
        <begin position="387"/>
        <end position="389"/>
    </location>
</feature>
<feature type="helix" evidence="11">
    <location>
        <begin position="391"/>
        <end position="415"/>
    </location>
</feature>
<feature type="helix" evidence="11">
    <location>
        <begin position="422"/>
        <end position="425"/>
    </location>
</feature>
<feature type="helix" evidence="11">
    <location>
        <begin position="427"/>
        <end position="441"/>
    </location>
</feature>
<feature type="turn" evidence="11">
    <location>
        <begin position="446"/>
        <end position="448"/>
    </location>
</feature>
<feature type="strand" evidence="11">
    <location>
        <begin position="450"/>
        <end position="452"/>
    </location>
</feature>
<feature type="helix" evidence="11">
    <location>
        <begin position="455"/>
        <end position="472"/>
    </location>
</feature>
<feature type="helix" evidence="11">
    <location>
        <begin position="476"/>
        <end position="499"/>
    </location>
</feature>
<feature type="helix" evidence="11">
    <location>
        <begin position="505"/>
        <end position="512"/>
    </location>
</feature>
<feature type="helix" evidence="11">
    <location>
        <begin position="521"/>
        <end position="537"/>
    </location>
</feature>
<feature type="helix" evidence="11">
    <location>
        <begin position="538"/>
        <end position="541"/>
    </location>
</feature>
<feature type="helix" evidence="11">
    <location>
        <begin position="542"/>
        <end position="547"/>
    </location>
</feature>
<feature type="helix" evidence="11">
    <location>
        <begin position="553"/>
        <end position="558"/>
    </location>
</feature>
<feature type="helix" evidence="11">
    <location>
        <begin position="562"/>
        <end position="583"/>
    </location>
</feature>
<feature type="helix" evidence="11">
    <location>
        <begin position="589"/>
        <end position="601"/>
    </location>
</feature>
<feature type="helix" evidence="11">
    <location>
        <begin position="606"/>
        <end position="630"/>
    </location>
</feature>
<feature type="strand" evidence="11">
    <location>
        <begin position="632"/>
        <end position="635"/>
    </location>
</feature>
<feature type="helix" evidence="11">
    <location>
        <begin position="639"/>
        <end position="657"/>
    </location>
</feature>
<sequence length="660" mass="70423">MSKRIALFPALLLALLVIVATALTWMNFSQALPRSQWAQAAWSPDIDVIEQMIFHYSLLPRLAISLLVGAGLGLVGVLFQQVLRNPLAEPTTLGVATGAQLGITVTTLWAIPGAMASQFAAQAGACVVGLIVFGVAWGKRLSPVTLILAGLVVSLYCGAINQLLVIFHHDQLQSMFLWSTGTLTQTDWGGVERLWPQLLGGVMLTLLLLRPLTLMGLDDGVARNLGLALSLARLAALSLAIVISALLVNAVGIIGFIGLFAPLLAKMLGARRLLPRLMLASLIGALILWLSDQIILWLTRVWMEVSTGSVTALIGAPLLLWLLPRLRSISAPDMKVNDRVAAERQHVLAFALAGGVLLLMAVVVALSFGRDAHGWTWASGALLEDLMPWRWPRIMAALFAGVMLAVAGCIIQRLTGNPMASPEVLGISSGAAFGVVLMLFLVPGNAFGWLLPAGSLGAAVTLLIIMIAAGRGGFSPHRMLLAGMALSTAFTMLLMMLQASGDPRMAQVLTWISGSTYNATDAQVWRTGIVMVILLAITPLCRRWLTILPLGGDTARAVGMALTPTRIALLLLAACLTATATMTIGPLSFVGLMAPHIARMMGFRRTMPHIVISALVGGLLLVFADWCGRMVLFPFQIPAGLLSTFIGAPYFIYLLRKQSR</sequence>
<protein>
    <recommendedName>
        <fullName evidence="9">Iron(3+)-hydroxamate import system permease protein FhuB</fullName>
    </recommendedName>
    <alternativeName>
        <fullName evidence="9">Ferric hydroxamate uptake protein B</fullName>
    </alternativeName>
    <alternativeName>
        <fullName evidence="9">Ferrichrome transport system permease protein FhuB</fullName>
    </alternativeName>
    <alternativeName>
        <fullName evidence="9">Ferrichrome uptake protein FhuB</fullName>
    </alternativeName>
    <alternativeName>
        <fullName evidence="9">Iron(III)-hydroxamate import system permease protein FhuB</fullName>
    </alternativeName>
</protein>
<keyword id="KW-0002">3D-structure</keyword>
<keyword id="KW-0997">Cell inner membrane</keyword>
<keyword id="KW-1003">Cell membrane</keyword>
<keyword id="KW-0406">Ion transport</keyword>
<keyword id="KW-0408">Iron</keyword>
<keyword id="KW-0410">Iron transport</keyword>
<keyword id="KW-0472">Membrane</keyword>
<keyword id="KW-1185">Reference proteome</keyword>
<keyword id="KW-0812">Transmembrane</keyword>
<keyword id="KW-1133">Transmembrane helix</keyword>
<keyword id="KW-0813">Transport</keyword>
<name>FHUB_ECOLI</name>
<gene>
    <name type="primary">fhuB</name>
    <name type="ordered locus">b0153</name>
    <name type="ordered locus">JW0149</name>
</gene>
<reference key="1">
    <citation type="journal article" date="1986" name="Mol. Gen. Genet.">
        <title>Iron hydroxamate transport of Escherichia coli: nucleotide sequence of the fhuB gene and identification of the protein.</title>
        <authorList>
            <person name="Koester W."/>
            <person name="Braun V."/>
        </authorList>
    </citation>
    <scope>NUCLEOTIDE SEQUENCE [GENOMIC DNA]</scope>
    <scope>FUNCTION</scope>
</reference>
<reference key="2">
    <citation type="journal article" date="1994" name="Nucleic Acids Res.">
        <title>Systematic sequencing of the Escherichia coli genome: analysis of the 2.4-4.1 min (110,917-193,643 bp) region.</title>
        <authorList>
            <person name="Fujita N."/>
            <person name="Mori H."/>
            <person name="Yura T."/>
            <person name="Ishihama A."/>
        </authorList>
    </citation>
    <scope>NUCLEOTIDE SEQUENCE [LARGE SCALE GENOMIC DNA]</scope>
    <source>
        <strain>K12 / W3110 / ATCC 27325 / DSM 5911</strain>
    </source>
</reference>
<reference key="3">
    <citation type="submission" date="1997-01" db="EMBL/GenBank/DDBJ databases">
        <title>Sequence of minutes 4-25 of Escherichia coli.</title>
        <authorList>
            <person name="Chung E."/>
            <person name="Allen E."/>
            <person name="Araujo R."/>
            <person name="Aparicio A.M."/>
            <person name="Davis K."/>
            <person name="Duncan M."/>
            <person name="Federspiel N."/>
            <person name="Hyman R."/>
            <person name="Kalman S."/>
            <person name="Komp C."/>
            <person name="Kurdi O."/>
            <person name="Lew H."/>
            <person name="Lin D."/>
            <person name="Namath A."/>
            <person name="Oefner P."/>
            <person name="Roberts D."/>
            <person name="Schramm S."/>
            <person name="Davis R.W."/>
        </authorList>
    </citation>
    <scope>NUCLEOTIDE SEQUENCE [LARGE SCALE GENOMIC DNA]</scope>
    <source>
        <strain>K12 / MG1655 / ATCC 47076</strain>
    </source>
</reference>
<reference key="4">
    <citation type="journal article" date="1997" name="Science">
        <title>The complete genome sequence of Escherichia coli K-12.</title>
        <authorList>
            <person name="Blattner F.R."/>
            <person name="Plunkett G. III"/>
            <person name="Bloch C.A."/>
            <person name="Perna N.T."/>
            <person name="Burland V."/>
            <person name="Riley M."/>
            <person name="Collado-Vides J."/>
            <person name="Glasner J.D."/>
            <person name="Rode C.K."/>
            <person name="Mayhew G.F."/>
            <person name="Gregor J."/>
            <person name="Davis N.W."/>
            <person name="Kirkpatrick H.A."/>
            <person name="Goeden M.A."/>
            <person name="Rose D.J."/>
            <person name="Mau B."/>
            <person name="Shao Y."/>
        </authorList>
    </citation>
    <scope>NUCLEOTIDE SEQUENCE [LARGE SCALE GENOMIC DNA]</scope>
    <source>
        <strain>K12 / MG1655 / ATCC 47076</strain>
    </source>
</reference>
<reference key="5">
    <citation type="journal article" date="2006" name="Mol. Syst. Biol.">
        <title>Highly accurate genome sequences of Escherichia coli K-12 strains MG1655 and W3110.</title>
        <authorList>
            <person name="Hayashi K."/>
            <person name="Morooka N."/>
            <person name="Yamamoto Y."/>
            <person name="Fujita K."/>
            <person name="Isono K."/>
            <person name="Choi S."/>
            <person name="Ohtsubo E."/>
            <person name="Baba T."/>
            <person name="Wanner B.L."/>
            <person name="Mori H."/>
            <person name="Horiuchi T."/>
        </authorList>
    </citation>
    <scope>NUCLEOTIDE SEQUENCE [LARGE SCALE GENOMIC DNA]</scope>
    <scope>SEQUENCE REVISION TO 311 AND 364</scope>
    <source>
        <strain>K12 / W3110 / ATCC 27325 / DSM 5911</strain>
    </source>
</reference>
<reference key="6">
    <citation type="journal article" date="1987" name="Mol. Gen. Genet.">
        <title>Nucleotide sequence of the fhuC and fhuD genes involved in iron (III) hydroxamate transport: domains in FhuC homologous to ATP-binding proteins.</title>
        <authorList>
            <person name="Burkhardt R."/>
            <person name="Braun V."/>
        </authorList>
    </citation>
    <scope>NUCLEOTIDE SEQUENCE [GENOMIC DNA] OF 1-23</scope>
</reference>
<reference key="7">
    <citation type="journal article" date="1992" name="J. Bacteriol.">
        <title>Iron(III) hydroxamate transport in Escherichia coli K-12: FhuB-mediated membrane association of the FhuC protein and negative complementation of fhuC mutants.</title>
        <authorList>
            <person name="Schultz-Hauser G."/>
            <person name="Koester W."/>
            <person name="Schwarz H."/>
            <person name="Braun V."/>
        </authorList>
    </citation>
    <scope>FUNCTION IN IRON(3+)-HYDROXAMATE TRANSPORT</scope>
    <scope>INTERACTION WITH FHUC</scope>
    <source>
        <strain>K12</strain>
    </source>
</reference>
<reference key="8">
    <citation type="journal article" date="1995" name="J. Bacteriol.">
        <title>Ferrichrome transport in Escherichia coli K-12: altered substrate specificity of mutated periplasmic FhuD and interaction of FhuD with the integral membrane protein FhuB.</title>
        <authorList>
            <person name="Rohrbach M.R."/>
            <person name="Braun V."/>
            <person name="Koester W."/>
        </authorList>
    </citation>
    <scope>INTERACTION WITH FHUD</scope>
</reference>
<reference key="9">
    <citation type="journal article" date="1997" name="Mol. Microbiol.">
        <title>ATP-dependent ferric hydroxamate transport system in Escherichia coli: periplasmic FhuD interacts with a periplasmic and with a transmembrane/cytoplasmic region of the integral membrane protein FhuB, as revealed by competitive peptide mapping.</title>
        <authorList>
            <person name="Mademidis A."/>
            <person name="Killmann H."/>
            <person name="Kraas W."/>
            <person name="Flechsler I."/>
            <person name="Jung G."/>
            <person name="Braun V."/>
        </authorList>
    </citation>
    <scope>INTERACTION WITH FHUD</scope>
    <scope>DOMAIN</scope>
</reference>
<reference key="10">
    <citation type="journal article" date="2005" name="Science">
        <title>Global topology analysis of the Escherichia coli inner membrane proteome.</title>
        <authorList>
            <person name="Daley D.O."/>
            <person name="Rapp M."/>
            <person name="Granseth E."/>
            <person name="Melen K."/>
            <person name="Drew D."/>
            <person name="von Heijne G."/>
        </authorList>
    </citation>
    <scope>SUBCELLULAR LOCATION</scope>
    <source>
        <strain>K12 / MG1655 / ATCC 47076</strain>
    </source>
</reference>
<reference key="11">
    <citation type="journal article" date="2009" name="Mol. Cell">
        <title>Hydroxyurea induces hydroxyl radical-mediated cell death in Escherichia coli.</title>
        <authorList>
            <person name="Davies B.W."/>
            <person name="Kohanski M.A."/>
            <person name="Simmons L.A."/>
            <person name="Winkler J.A."/>
            <person name="Collins J.J."/>
            <person name="Walker G.C."/>
        </authorList>
    </citation>
    <scope>INDUCTION BY HYDROXYUREA</scope>
    <source>
        <strain>K12 / MC4100 / ATCC 35695 / DSM 6574</strain>
    </source>
</reference>
<reference key="12">
    <citation type="journal article" date="2021" name="Commun. Biol.">
        <title>Cryo-EM reveals unique structural features of the FhuCDB Escherichia coli ferrichrome importer.</title>
        <authorList>
            <person name="Hu W."/>
            <person name="Zheng H."/>
        </authorList>
    </citation>
    <scope>STRUCTURE BY ELECTRON MICROSCOPY (3.4 ANGSTROMS)</scope>
    <scope>FUNCTION</scope>
    <scope>INTERACTION WITH FHUD</scope>
    <scope>SUBUNIT</scope>
    <scope>MUTAGENESIS OF SER-57; ASP-170; GLN-171; MET-175; THR-182; THR-184; GLU-304; ARG-390; MET-484; MET-492; MET-495; GLN-507; THR-510; SER-515; TYR-517 AND GLN-636</scope>
    <scope>SUBSTRATE IMPORT MECHANISM OF THE FHUCDB COMPLEX</scope>
</reference>
<dbReference type="EMBL" id="X04319">
    <property type="protein sequence ID" value="CAA27852.1"/>
    <property type="molecule type" value="Genomic_DNA"/>
</dbReference>
<dbReference type="EMBL" id="X04319">
    <property type="protein sequence ID" value="CAA27853.1"/>
    <property type="status" value="ALT_INIT"/>
    <property type="molecule type" value="Genomic_DNA"/>
</dbReference>
<dbReference type="EMBL" id="U70214">
    <property type="protein sequence ID" value="AAB08583.1"/>
    <property type="molecule type" value="Genomic_DNA"/>
</dbReference>
<dbReference type="EMBL" id="U00096">
    <property type="protein sequence ID" value="AAC73264.1"/>
    <property type="molecule type" value="Genomic_DNA"/>
</dbReference>
<dbReference type="EMBL" id="AP009048">
    <property type="protein sequence ID" value="BAB96729.2"/>
    <property type="molecule type" value="Genomic_DNA"/>
</dbReference>
<dbReference type="EMBL" id="X05810">
    <property type="protein sequence ID" value="CAA29256.1"/>
    <property type="molecule type" value="Genomic_DNA"/>
</dbReference>
<dbReference type="PIR" id="A64739">
    <property type="entry name" value="A64739"/>
</dbReference>
<dbReference type="RefSeq" id="NP_414695.1">
    <property type="nucleotide sequence ID" value="NC_000913.3"/>
</dbReference>
<dbReference type="RefSeq" id="WP_000044072.1">
    <property type="nucleotide sequence ID" value="NZ_LN832404.1"/>
</dbReference>
<dbReference type="PDB" id="7LB8">
    <property type="method" value="EM"/>
    <property type="resolution" value="3.40 A"/>
    <property type="chains" value="B=1-660"/>
</dbReference>
<dbReference type="PDBsum" id="7LB8"/>
<dbReference type="EMDB" id="EMD-23251"/>
<dbReference type="SMR" id="P06972"/>
<dbReference type="BioGRID" id="4259735">
    <property type="interactions" value="165"/>
</dbReference>
<dbReference type="ComplexPortal" id="CPX-4286">
    <property type="entry name" value="Ferric-hydroxamate ABC transporter complex"/>
</dbReference>
<dbReference type="DIP" id="DIP-9603N"/>
<dbReference type="FunCoup" id="P06972">
    <property type="interactions" value="214"/>
</dbReference>
<dbReference type="IntAct" id="P06972">
    <property type="interactions" value="1"/>
</dbReference>
<dbReference type="STRING" id="511145.b0153"/>
<dbReference type="TCDB" id="3.A.1.14.3">
    <property type="family name" value="the atp-binding cassette (abc) superfamily"/>
</dbReference>
<dbReference type="PaxDb" id="511145-b0153"/>
<dbReference type="EnsemblBacteria" id="AAC73264">
    <property type="protein sequence ID" value="AAC73264"/>
    <property type="gene ID" value="b0153"/>
</dbReference>
<dbReference type="GeneID" id="946890"/>
<dbReference type="KEGG" id="ecj:JW0149"/>
<dbReference type="KEGG" id="eco:b0153"/>
<dbReference type="KEGG" id="ecoc:C3026_00695"/>
<dbReference type="PATRIC" id="fig|1411691.4.peg.2127"/>
<dbReference type="EchoBASE" id="EB0299"/>
<dbReference type="eggNOG" id="COG0609">
    <property type="taxonomic scope" value="Bacteria"/>
</dbReference>
<dbReference type="HOGENOM" id="CLU_013016_7_3_6"/>
<dbReference type="InParanoid" id="P06972"/>
<dbReference type="OMA" id="WMSGSTY"/>
<dbReference type="OrthoDB" id="9811721at2"/>
<dbReference type="PhylomeDB" id="P06972"/>
<dbReference type="BioCyc" id="EcoCyc:FHUB-MONOMER"/>
<dbReference type="BioCyc" id="MetaCyc:FHUB-MONOMER"/>
<dbReference type="PRO" id="PR:P06972"/>
<dbReference type="Proteomes" id="UP000000625">
    <property type="component" value="Chromosome"/>
</dbReference>
<dbReference type="GO" id="GO:0043190">
    <property type="term" value="C:ATP-binding cassette (ABC) transporter complex"/>
    <property type="evidence" value="ECO:0000304"/>
    <property type="project" value="EcoCyc"/>
</dbReference>
<dbReference type="GO" id="GO:0055052">
    <property type="term" value="C:ATP-binding cassette (ABC) transporter complex, substrate-binding subunit-containing"/>
    <property type="evidence" value="ECO:0000303"/>
    <property type="project" value="ComplexPortal"/>
</dbReference>
<dbReference type="GO" id="GO:0005886">
    <property type="term" value="C:plasma membrane"/>
    <property type="evidence" value="ECO:0000314"/>
    <property type="project" value="EcoCyc"/>
</dbReference>
<dbReference type="GO" id="GO:0015344">
    <property type="term" value="F:siderophore uptake transmembrane transporter activity"/>
    <property type="evidence" value="ECO:0000269"/>
    <property type="project" value="EcoCyc"/>
</dbReference>
<dbReference type="GO" id="GO:0022857">
    <property type="term" value="F:transmembrane transporter activity"/>
    <property type="evidence" value="ECO:0000318"/>
    <property type="project" value="GO_Central"/>
</dbReference>
<dbReference type="GO" id="GO:0015687">
    <property type="term" value="P:ferric-hydroxamate import into cell"/>
    <property type="evidence" value="ECO:0000269"/>
    <property type="project" value="EcoCyc"/>
</dbReference>
<dbReference type="GO" id="GO:0098711">
    <property type="term" value="P:iron ion import across plasma membrane"/>
    <property type="evidence" value="ECO:0000303"/>
    <property type="project" value="ComplexPortal"/>
</dbReference>
<dbReference type="GO" id="GO:0033214">
    <property type="term" value="P:siderophore-dependent iron import into cell"/>
    <property type="evidence" value="ECO:0000318"/>
    <property type="project" value="GO_Central"/>
</dbReference>
<dbReference type="CDD" id="cd06550">
    <property type="entry name" value="TM_ABC_iron-siderophores_like"/>
    <property type="match status" value="2"/>
</dbReference>
<dbReference type="FunFam" id="1.10.3470.10:FF:000011">
    <property type="entry name" value="Fe(3+)-hydroxamate ABC transporter permease FhuB"/>
    <property type="match status" value="1"/>
</dbReference>
<dbReference type="FunFam" id="1.10.3470.10:FF:000013">
    <property type="entry name" value="Fe(3+)-hydroxamate ABC transporter permease FhuB"/>
    <property type="match status" value="1"/>
</dbReference>
<dbReference type="Gene3D" id="1.10.3470.10">
    <property type="entry name" value="ABC transporter involved in vitamin B12 uptake, BtuC"/>
    <property type="match status" value="2"/>
</dbReference>
<dbReference type="InterPro" id="IPR037294">
    <property type="entry name" value="ABC_BtuC-like"/>
</dbReference>
<dbReference type="InterPro" id="IPR000522">
    <property type="entry name" value="ABC_transptr_permease_BtuC"/>
</dbReference>
<dbReference type="NCBIfam" id="NF007865">
    <property type="entry name" value="PRK10577.1-1"/>
    <property type="match status" value="1"/>
</dbReference>
<dbReference type="NCBIfam" id="NF007866">
    <property type="entry name" value="PRK10577.1-2"/>
    <property type="match status" value="1"/>
</dbReference>
<dbReference type="NCBIfam" id="NF007868">
    <property type="entry name" value="PRK10577.1-5"/>
    <property type="match status" value="1"/>
</dbReference>
<dbReference type="PANTHER" id="PTHR30472:SF37">
    <property type="entry name" value="FE(3+) DICITRATE TRANSPORT SYSTEM PERMEASE PROTEIN FECD-RELATED"/>
    <property type="match status" value="1"/>
</dbReference>
<dbReference type="PANTHER" id="PTHR30472">
    <property type="entry name" value="FERRIC ENTEROBACTIN TRANSPORT SYSTEM PERMEASE PROTEIN"/>
    <property type="match status" value="1"/>
</dbReference>
<dbReference type="Pfam" id="PF01032">
    <property type="entry name" value="FecCD"/>
    <property type="match status" value="2"/>
</dbReference>
<dbReference type="SUPFAM" id="SSF81345">
    <property type="entry name" value="ABC transporter involved in vitamin B12 uptake, BtuC"/>
    <property type="match status" value="2"/>
</dbReference>
<evidence type="ECO:0000255" key="1"/>
<evidence type="ECO:0000269" key="2">
    <source>
    </source>
</evidence>
<evidence type="ECO:0000269" key="3">
    <source>
    </source>
</evidence>
<evidence type="ECO:0000269" key="4">
    <source>
    </source>
</evidence>
<evidence type="ECO:0000269" key="5">
    <source>
    </source>
</evidence>
<evidence type="ECO:0000269" key="6">
    <source>
    </source>
</evidence>
<evidence type="ECO:0000269" key="7">
    <source>
    </source>
</evidence>
<evidence type="ECO:0000269" key="8">
    <source>
    </source>
</evidence>
<evidence type="ECO:0000305" key="9"/>
<evidence type="ECO:0007744" key="10">
    <source>
        <dbReference type="PDB" id="7LB8"/>
    </source>
</evidence>
<evidence type="ECO:0007829" key="11">
    <source>
        <dbReference type="PDB" id="7LB8"/>
    </source>
</evidence>
<accession>P06972</accession>
<accession>P77372</accession>
<organism>
    <name type="scientific">Escherichia coli (strain K12)</name>
    <dbReference type="NCBI Taxonomy" id="83333"/>
    <lineage>
        <taxon>Bacteria</taxon>
        <taxon>Pseudomonadati</taxon>
        <taxon>Pseudomonadota</taxon>
        <taxon>Gammaproteobacteria</taxon>
        <taxon>Enterobacterales</taxon>
        <taxon>Enterobacteriaceae</taxon>
        <taxon>Escherichia</taxon>
    </lineage>
</organism>